<gene>
    <name evidence="1" type="primary">thrS</name>
    <name type="ordered locus">Shewana3_2043</name>
</gene>
<comment type="function">
    <text evidence="1">Catalyzes the attachment of threonine to tRNA(Thr) in a two-step reaction: L-threonine is first activated by ATP to form Thr-AMP and then transferred to the acceptor end of tRNA(Thr). Also edits incorrectly charged L-seryl-tRNA(Thr).</text>
</comment>
<comment type="catalytic activity">
    <reaction evidence="1">
        <text>tRNA(Thr) + L-threonine + ATP = L-threonyl-tRNA(Thr) + AMP + diphosphate + H(+)</text>
        <dbReference type="Rhea" id="RHEA:24624"/>
        <dbReference type="Rhea" id="RHEA-COMP:9670"/>
        <dbReference type="Rhea" id="RHEA-COMP:9704"/>
        <dbReference type="ChEBI" id="CHEBI:15378"/>
        <dbReference type="ChEBI" id="CHEBI:30616"/>
        <dbReference type="ChEBI" id="CHEBI:33019"/>
        <dbReference type="ChEBI" id="CHEBI:57926"/>
        <dbReference type="ChEBI" id="CHEBI:78442"/>
        <dbReference type="ChEBI" id="CHEBI:78534"/>
        <dbReference type="ChEBI" id="CHEBI:456215"/>
        <dbReference type="EC" id="6.1.1.3"/>
    </reaction>
</comment>
<comment type="cofactor">
    <cofactor evidence="1">
        <name>Zn(2+)</name>
        <dbReference type="ChEBI" id="CHEBI:29105"/>
    </cofactor>
    <text evidence="1">Binds 1 zinc ion per subunit.</text>
</comment>
<comment type="subunit">
    <text evidence="1">Homodimer.</text>
</comment>
<comment type="subcellular location">
    <subcellularLocation>
        <location evidence="1">Cytoplasm</location>
    </subcellularLocation>
</comment>
<comment type="similarity">
    <text evidence="1">Belongs to the class-II aminoacyl-tRNA synthetase family.</text>
</comment>
<dbReference type="EC" id="6.1.1.3" evidence="1"/>
<dbReference type="EMBL" id="CP000469">
    <property type="protein sequence ID" value="ABK48273.1"/>
    <property type="molecule type" value="Genomic_DNA"/>
</dbReference>
<dbReference type="RefSeq" id="WP_011622724.1">
    <property type="nucleotide sequence ID" value="NC_008577.1"/>
</dbReference>
<dbReference type="SMR" id="A0KWV4"/>
<dbReference type="STRING" id="94122.Shewana3_2043"/>
<dbReference type="GeneID" id="94727987"/>
<dbReference type="KEGG" id="shn:Shewana3_2043"/>
<dbReference type="eggNOG" id="COG0441">
    <property type="taxonomic scope" value="Bacteria"/>
</dbReference>
<dbReference type="HOGENOM" id="CLU_008554_0_1_6"/>
<dbReference type="OrthoDB" id="9802304at2"/>
<dbReference type="Proteomes" id="UP000002589">
    <property type="component" value="Chromosome"/>
</dbReference>
<dbReference type="GO" id="GO:0005829">
    <property type="term" value="C:cytosol"/>
    <property type="evidence" value="ECO:0007669"/>
    <property type="project" value="TreeGrafter"/>
</dbReference>
<dbReference type="GO" id="GO:0005524">
    <property type="term" value="F:ATP binding"/>
    <property type="evidence" value="ECO:0007669"/>
    <property type="project" value="UniProtKB-UniRule"/>
</dbReference>
<dbReference type="GO" id="GO:0046872">
    <property type="term" value="F:metal ion binding"/>
    <property type="evidence" value="ECO:0007669"/>
    <property type="project" value="UniProtKB-KW"/>
</dbReference>
<dbReference type="GO" id="GO:0004829">
    <property type="term" value="F:threonine-tRNA ligase activity"/>
    <property type="evidence" value="ECO:0007669"/>
    <property type="project" value="UniProtKB-UniRule"/>
</dbReference>
<dbReference type="GO" id="GO:0000049">
    <property type="term" value="F:tRNA binding"/>
    <property type="evidence" value="ECO:0007669"/>
    <property type="project" value="UniProtKB-KW"/>
</dbReference>
<dbReference type="GO" id="GO:0006435">
    <property type="term" value="P:threonyl-tRNA aminoacylation"/>
    <property type="evidence" value="ECO:0007669"/>
    <property type="project" value="UniProtKB-UniRule"/>
</dbReference>
<dbReference type="CDD" id="cd01667">
    <property type="entry name" value="TGS_ThrRS"/>
    <property type="match status" value="1"/>
</dbReference>
<dbReference type="CDD" id="cd00860">
    <property type="entry name" value="ThrRS_anticodon"/>
    <property type="match status" value="1"/>
</dbReference>
<dbReference type="CDD" id="cd00771">
    <property type="entry name" value="ThrRS_core"/>
    <property type="match status" value="1"/>
</dbReference>
<dbReference type="FunFam" id="3.10.20.30:FF:000005">
    <property type="entry name" value="Threonine--tRNA ligase"/>
    <property type="match status" value="1"/>
</dbReference>
<dbReference type="FunFam" id="3.30.54.20:FF:000002">
    <property type="entry name" value="Threonine--tRNA ligase"/>
    <property type="match status" value="1"/>
</dbReference>
<dbReference type="FunFam" id="3.30.930.10:FF:000002">
    <property type="entry name" value="Threonine--tRNA ligase"/>
    <property type="match status" value="1"/>
</dbReference>
<dbReference type="FunFam" id="3.40.50.800:FF:000001">
    <property type="entry name" value="Threonine--tRNA ligase"/>
    <property type="match status" value="1"/>
</dbReference>
<dbReference type="FunFam" id="3.30.980.10:FF:000005">
    <property type="entry name" value="Threonyl-tRNA synthetase, mitochondrial"/>
    <property type="match status" value="1"/>
</dbReference>
<dbReference type="Gene3D" id="3.10.20.30">
    <property type="match status" value="1"/>
</dbReference>
<dbReference type="Gene3D" id="3.30.54.20">
    <property type="match status" value="1"/>
</dbReference>
<dbReference type="Gene3D" id="3.40.50.800">
    <property type="entry name" value="Anticodon-binding domain"/>
    <property type="match status" value="1"/>
</dbReference>
<dbReference type="Gene3D" id="3.30.930.10">
    <property type="entry name" value="Bira Bifunctional Protein, Domain 2"/>
    <property type="match status" value="1"/>
</dbReference>
<dbReference type="Gene3D" id="3.30.980.10">
    <property type="entry name" value="Threonyl-trna Synthetase, Chain A, domain 2"/>
    <property type="match status" value="1"/>
</dbReference>
<dbReference type="HAMAP" id="MF_00184">
    <property type="entry name" value="Thr_tRNA_synth"/>
    <property type="match status" value="1"/>
</dbReference>
<dbReference type="InterPro" id="IPR002314">
    <property type="entry name" value="aa-tRNA-synt_IIb"/>
</dbReference>
<dbReference type="InterPro" id="IPR006195">
    <property type="entry name" value="aa-tRNA-synth_II"/>
</dbReference>
<dbReference type="InterPro" id="IPR045864">
    <property type="entry name" value="aa-tRNA-synth_II/BPL/LPL"/>
</dbReference>
<dbReference type="InterPro" id="IPR004154">
    <property type="entry name" value="Anticodon-bd"/>
</dbReference>
<dbReference type="InterPro" id="IPR036621">
    <property type="entry name" value="Anticodon-bd_dom_sf"/>
</dbReference>
<dbReference type="InterPro" id="IPR012675">
    <property type="entry name" value="Beta-grasp_dom_sf"/>
</dbReference>
<dbReference type="InterPro" id="IPR004095">
    <property type="entry name" value="TGS"/>
</dbReference>
<dbReference type="InterPro" id="IPR012676">
    <property type="entry name" value="TGS-like"/>
</dbReference>
<dbReference type="InterPro" id="IPR002320">
    <property type="entry name" value="Thr-tRNA-ligase_IIa"/>
</dbReference>
<dbReference type="InterPro" id="IPR018163">
    <property type="entry name" value="Thr/Ala-tRNA-synth_IIc_edit"/>
</dbReference>
<dbReference type="InterPro" id="IPR047246">
    <property type="entry name" value="ThrRS_anticodon"/>
</dbReference>
<dbReference type="InterPro" id="IPR033728">
    <property type="entry name" value="ThrRS_core"/>
</dbReference>
<dbReference type="InterPro" id="IPR012947">
    <property type="entry name" value="tRNA_SAD"/>
</dbReference>
<dbReference type="NCBIfam" id="TIGR00418">
    <property type="entry name" value="thrS"/>
    <property type="match status" value="1"/>
</dbReference>
<dbReference type="PANTHER" id="PTHR11451:SF44">
    <property type="entry name" value="THREONINE--TRNA LIGASE, CHLOROPLASTIC_MITOCHONDRIAL 2"/>
    <property type="match status" value="1"/>
</dbReference>
<dbReference type="PANTHER" id="PTHR11451">
    <property type="entry name" value="THREONINE-TRNA LIGASE"/>
    <property type="match status" value="1"/>
</dbReference>
<dbReference type="Pfam" id="PF03129">
    <property type="entry name" value="HGTP_anticodon"/>
    <property type="match status" value="1"/>
</dbReference>
<dbReference type="Pfam" id="PF02824">
    <property type="entry name" value="TGS"/>
    <property type="match status" value="1"/>
</dbReference>
<dbReference type="Pfam" id="PF00587">
    <property type="entry name" value="tRNA-synt_2b"/>
    <property type="match status" value="1"/>
</dbReference>
<dbReference type="Pfam" id="PF07973">
    <property type="entry name" value="tRNA_SAD"/>
    <property type="match status" value="1"/>
</dbReference>
<dbReference type="PRINTS" id="PR01047">
    <property type="entry name" value="TRNASYNTHTHR"/>
</dbReference>
<dbReference type="SMART" id="SM00863">
    <property type="entry name" value="tRNA_SAD"/>
    <property type="match status" value="1"/>
</dbReference>
<dbReference type="SUPFAM" id="SSF52954">
    <property type="entry name" value="Class II aaRS ABD-related"/>
    <property type="match status" value="1"/>
</dbReference>
<dbReference type="SUPFAM" id="SSF55681">
    <property type="entry name" value="Class II aaRS and biotin synthetases"/>
    <property type="match status" value="1"/>
</dbReference>
<dbReference type="SUPFAM" id="SSF81271">
    <property type="entry name" value="TGS-like"/>
    <property type="match status" value="1"/>
</dbReference>
<dbReference type="SUPFAM" id="SSF55186">
    <property type="entry name" value="ThrRS/AlaRS common domain"/>
    <property type="match status" value="1"/>
</dbReference>
<dbReference type="PROSITE" id="PS50862">
    <property type="entry name" value="AA_TRNA_LIGASE_II"/>
    <property type="match status" value="1"/>
</dbReference>
<dbReference type="PROSITE" id="PS51880">
    <property type="entry name" value="TGS"/>
    <property type="match status" value="1"/>
</dbReference>
<keyword id="KW-0030">Aminoacyl-tRNA synthetase</keyword>
<keyword id="KW-0067">ATP-binding</keyword>
<keyword id="KW-0963">Cytoplasm</keyword>
<keyword id="KW-0436">Ligase</keyword>
<keyword id="KW-0479">Metal-binding</keyword>
<keyword id="KW-0547">Nucleotide-binding</keyword>
<keyword id="KW-0648">Protein biosynthesis</keyword>
<keyword id="KW-0694">RNA-binding</keyword>
<keyword id="KW-0820">tRNA-binding</keyword>
<keyword id="KW-0862">Zinc</keyword>
<protein>
    <recommendedName>
        <fullName evidence="1">Threonine--tRNA ligase</fullName>
        <ecNumber evidence="1">6.1.1.3</ecNumber>
    </recommendedName>
    <alternativeName>
        <fullName evidence="1">Threonyl-tRNA synthetase</fullName>
        <shortName evidence="1">ThrRS</shortName>
    </alternativeName>
</protein>
<accession>A0KWV4</accession>
<evidence type="ECO:0000255" key="1">
    <source>
        <dbReference type="HAMAP-Rule" id="MF_00184"/>
    </source>
</evidence>
<evidence type="ECO:0000255" key="2">
    <source>
        <dbReference type="PROSITE-ProRule" id="PRU01228"/>
    </source>
</evidence>
<organism>
    <name type="scientific">Shewanella sp. (strain ANA-3)</name>
    <dbReference type="NCBI Taxonomy" id="94122"/>
    <lineage>
        <taxon>Bacteria</taxon>
        <taxon>Pseudomonadati</taxon>
        <taxon>Pseudomonadota</taxon>
        <taxon>Gammaproteobacteria</taxon>
        <taxon>Alteromonadales</taxon>
        <taxon>Shewanellaceae</taxon>
        <taxon>Shewanella</taxon>
    </lineage>
</organism>
<name>SYT_SHESA</name>
<feature type="chain" id="PRO_1000020507" description="Threonine--tRNA ligase">
    <location>
        <begin position="1"/>
        <end position="642"/>
    </location>
</feature>
<feature type="domain" description="TGS" evidence="2">
    <location>
        <begin position="1"/>
        <end position="61"/>
    </location>
</feature>
<feature type="region of interest" description="Catalytic" evidence="1">
    <location>
        <begin position="243"/>
        <end position="534"/>
    </location>
</feature>
<feature type="binding site" evidence="1">
    <location>
        <position position="334"/>
    </location>
    <ligand>
        <name>Zn(2+)</name>
        <dbReference type="ChEBI" id="CHEBI:29105"/>
    </ligand>
</feature>
<feature type="binding site" evidence="1">
    <location>
        <position position="385"/>
    </location>
    <ligand>
        <name>Zn(2+)</name>
        <dbReference type="ChEBI" id="CHEBI:29105"/>
    </ligand>
</feature>
<feature type="binding site" evidence="1">
    <location>
        <position position="511"/>
    </location>
    <ligand>
        <name>Zn(2+)</name>
        <dbReference type="ChEBI" id="CHEBI:29105"/>
    </ligand>
</feature>
<sequence length="642" mass="73703">MPVITLPDGSKREFAHPVSTLDVAADIGPGLAKACIAGRVNGELKDACDLIETDAELSIITAKDEEGIEILRHSCAHLLGHAIKQLWPQTKMAIGPVIDNGFYYDIDLEHKLTQEDIEALEKRMLELAKTNYDVVKRVVSWQEARDTFAARGEEYKIAILDENISKDATPALYHHEEYTDMCRGPHVPNMRFCHHFKLMSIAGAYWRGNSENKMLQRIYGTAWADKKALSTHLARLEEAAKRDHRKIGKQLDLYHMQEEAPGMVFWHNDGWSIFLELERFIRRKLNQYTYQEVKGPLMMDRVLWERSGHWDKYSEAMFTTSSENREYAVKPMNCPGHVQIFNQGLKSYRDLPLRMAEFGCCHRNEPSGSLHGLMRVRGFTQDDAHIFCTEDQVQAEVSSCIQMVYDTYSTFGFENIVVKLSTRPEKRIGDDAMWDRAEEALKQALRANNIEFTILPGEGAFYGPKIEFTLHDCLDRAWQCGTVQLDYALPSRLGATYVAEDNSRQTPVMIHRAILGSLERFLGILIEEYAGRFPTWLAPMQVVVMNITDKQADYVEEVVKFFKEQGIRASFDLRNEKIGFKIREHTLRRVPYLLVVGDQEMENKEVAVRTRDGVDLGKMRIEDFAAKIHQQISLRSLKLLEE</sequence>
<reference key="1">
    <citation type="submission" date="2006-09" db="EMBL/GenBank/DDBJ databases">
        <title>Complete sequence of chromosome 1 of Shewanella sp. ANA-3.</title>
        <authorList>
            <person name="Copeland A."/>
            <person name="Lucas S."/>
            <person name="Lapidus A."/>
            <person name="Barry K."/>
            <person name="Detter J.C."/>
            <person name="Glavina del Rio T."/>
            <person name="Hammon N."/>
            <person name="Israni S."/>
            <person name="Dalin E."/>
            <person name="Tice H."/>
            <person name="Pitluck S."/>
            <person name="Chertkov O."/>
            <person name="Brettin T."/>
            <person name="Bruce D."/>
            <person name="Han C."/>
            <person name="Tapia R."/>
            <person name="Gilna P."/>
            <person name="Schmutz J."/>
            <person name="Larimer F."/>
            <person name="Land M."/>
            <person name="Hauser L."/>
            <person name="Kyrpides N."/>
            <person name="Kim E."/>
            <person name="Newman D."/>
            <person name="Salticov C."/>
            <person name="Konstantinidis K."/>
            <person name="Klappenback J."/>
            <person name="Tiedje J."/>
            <person name="Richardson P."/>
        </authorList>
    </citation>
    <scope>NUCLEOTIDE SEQUENCE [LARGE SCALE GENOMIC DNA]</scope>
    <source>
        <strain>ANA-3</strain>
    </source>
</reference>
<proteinExistence type="inferred from homology"/>